<dbReference type="EC" id="2.7.8.13" evidence="1"/>
<dbReference type="EMBL" id="CP000026">
    <property type="protein sequence ID" value="AAV76160.1"/>
    <property type="molecule type" value="Genomic_DNA"/>
</dbReference>
<dbReference type="RefSeq" id="WP_000964137.1">
    <property type="nucleotide sequence ID" value="NC_006511.1"/>
</dbReference>
<dbReference type="SMR" id="Q5PDC3"/>
<dbReference type="KEGG" id="spt:SPA0127"/>
<dbReference type="HOGENOM" id="CLU_023982_0_0_6"/>
<dbReference type="UniPathway" id="UPA00219"/>
<dbReference type="Proteomes" id="UP000008185">
    <property type="component" value="Chromosome"/>
</dbReference>
<dbReference type="GO" id="GO:0005886">
    <property type="term" value="C:plasma membrane"/>
    <property type="evidence" value="ECO:0007669"/>
    <property type="project" value="UniProtKB-SubCell"/>
</dbReference>
<dbReference type="GO" id="GO:0046872">
    <property type="term" value="F:metal ion binding"/>
    <property type="evidence" value="ECO:0007669"/>
    <property type="project" value="UniProtKB-KW"/>
</dbReference>
<dbReference type="GO" id="GO:0008963">
    <property type="term" value="F:phospho-N-acetylmuramoyl-pentapeptide-transferase activity"/>
    <property type="evidence" value="ECO:0007669"/>
    <property type="project" value="UniProtKB-UniRule"/>
</dbReference>
<dbReference type="GO" id="GO:0051992">
    <property type="term" value="F:UDP-N-acetylmuramoyl-L-alanyl-D-glutamyl-meso-2,6-diaminopimelyl-D-alanyl-D-alanine:undecaprenyl-phosphate transferase activity"/>
    <property type="evidence" value="ECO:0007669"/>
    <property type="project" value="RHEA"/>
</dbReference>
<dbReference type="GO" id="GO:0051301">
    <property type="term" value="P:cell division"/>
    <property type="evidence" value="ECO:0007669"/>
    <property type="project" value="UniProtKB-KW"/>
</dbReference>
<dbReference type="GO" id="GO:0071555">
    <property type="term" value="P:cell wall organization"/>
    <property type="evidence" value="ECO:0007669"/>
    <property type="project" value="UniProtKB-KW"/>
</dbReference>
<dbReference type="GO" id="GO:0009252">
    <property type="term" value="P:peptidoglycan biosynthetic process"/>
    <property type="evidence" value="ECO:0007669"/>
    <property type="project" value="UniProtKB-UniRule"/>
</dbReference>
<dbReference type="GO" id="GO:0008360">
    <property type="term" value="P:regulation of cell shape"/>
    <property type="evidence" value="ECO:0007669"/>
    <property type="project" value="UniProtKB-KW"/>
</dbReference>
<dbReference type="CDD" id="cd06852">
    <property type="entry name" value="GT_MraY"/>
    <property type="match status" value="1"/>
</dbReference>
<dbReference type="HAMAP" id="MF_00038">
    <property type="entry name" value="MraY"/>
    <property type="match status" value="1"/>
</dbReference>
<dbReference type="InterPro" id="IPR000715">
    <property type="entry name" value="Glycosyl_transferase_4"/>
</dbReference>
<dbReference type="InterPro" id="IPR003524">
    <property type="entry name" value="PNAcMuramoyl-5peptid_Trfase"/>
</dbReference>
<dbReference type="InterPro" id="IPR018480">
    <property type="entry name" value="PNAcMuramoyl-5peptid_Trfase_CS"/>
</dbReference>
<dbReference type="NCBIfam" id="TIGR00445">
    <property type="entry name" value="mraY"/>
    <property type="match status" value="1"/>
</dbReference>
<dbReference type="PANTHER" id="PTHR22926">
    <property type="entry name" value="PHOSPHO-N-ACETYLMURAMOYL-PENTAPEPTIDE-TRANSFERASE"/>
    <property type="match status" value="1"/>
</dbReference>
<dbReference type="PANTHER" id="PTHR22926:SF5">
    <property type="entry name" value="PHOSPHO-N-ACETYLMURAMOYL-PENTAPEPTIDE-TRANSFERASE HOMOLOG"/>
    <property type="match status" value="1"/>
</dbReference>
<dbReference type="Pfam" id="PF00953">
    <property type="entry name" value="Glycos_transf_4"/>
    <property type="match status" value="1"/>
</dbReference>
<dbReference type="Pfam" id="PF10555">
    <property type="entry name" value="MraY_sig1"/>
    <property type="match status" value="1"/>
</dbReference>
<dbReference type="PROSITE" id="PS01347">
    <property type="entry name" value="MRAY_1"/>
    <property type="match status" value="1"/>
</dbReference>
<dbReference type="PROSITE" id="PS01348">
    <property type="entry name" value="MRAY_2"/>
    <property type="match status" value="1"/>
</dbReference>
<gene>
    <name evidence="1" type="primary">mraY</name>
    <name type="ordered locus">SPA0127</name>
</gene>
<accession>Q5PDC3</accession>
<protein>
    <recommendedName>
        <fullName evidence="1">Phospho-N-acetylmuramoyl-pentapeptide-transferase</fullName>
        <ecNumber evidence="1">2.7.8.13</ecNumber>
    </recommendedName>
    <alternativeName>
        <fullName evidence="1">UDP-MurNAc-pentapeptide phosphotransferase</fullName>
    </alternativeName>
</protein>
<proteinExistence type="inferred from homology"/>
<keyword id="KW-0131">Cell cycle</keyword>
<keyword id="KW-0132">Cell division</keyword>
<keyword id="KW-0997">Cell inner membrane</keyword>
<keyword id="KW-1003">Cell membrane</keyword>
<keyword id="KW-0133">Cell shape</keyword>
<keyword id="KW-0961">Cell wall biogenesis/degradation</keyword>
<keyword id="KW-0460">Magnesium</keyword>
<keyword id="KW-0472">Membrane</keyword>
<keyword id="KW-0479">Metal-binding</keyword>
<keyword id="KW-0573">Peptidoglycan synthesis</keyword>
<keyword id="KW-0808">Transferase</keyword>
<keyword id="KW-0812">Transmembrane</keyword>
<keyword id="KW-1133">Transmembrane helix</keyword>
<evidence type="ECO:0000255" key="1">
    <source>
        <dbReference type="HAMAP-Rule" id="MF_00038"/>
    </source>
</evidence>
<reference key="1">
    <citation type="journal article" date="2004" name="Nat. Genet.">
        <title>Comparison of genome degradation in Paratyphi A and Typhi, human-restricted serovars of Salmonella enterica that cause typhoid.</title>
        <authorList>
            <person name="McClelland M."/>
            <person name="Sanderson K.E."/>
            <person name="Clifton S.W."/>
            <person name="Latreille P."/>
            <person name="Porwollik S."/>
            <person name="Sabo A."/>
            <person name="Meyer R."/>
            <person name="Bieri T."/>
            <person name="Ozersky P."/>
            <person name="McLellan M."/>
            <person name="Harkins C.R."/>
            <person name="Wang C."/>
            <person name="Nguyen C."/>
            <person name="Berghoff A."/>
            <person name="Elliott G."/>
            <person name="Kohlberg S."/>
            <person name="Strong C."/>
            <person name="Du F."/>
            <person name="Carter J."/>
            <person name="Kremizki C."/>
            <person name="Layman D."/>
            <person name="Leonard S."/>
            <person name="Sun H."/>
            <person name="Fulton L."/>
            <person name="Nash W."/>
            <person name="Miner T."/>
            <person name="Minx P."/>
            <person name="Delehaunty K."/>
            <person name="Fronick C."/>
            <person name="Magrini V."/>
            <person name="Nhan M."/>
            <person name="Warren W."/>
            <person name="Florea L."/>
            <person name="Spieth J."/>
            <person name="Wilson R.K."/>
        </authorList>
    </citation>
    <scope>NUCLEOTIDE SEQUENCE [LARGE SCALE GENOMIC DNA]</scope>
    <source>
        <strain>ATCC 9150 / SARB42</strain>
    </source>
</reference>
<name>MRAY_SALPA</name>
<comment type="function">
    <text evidence="1">Catalyzes the initial step of the lipid cycle reactions in the biosynthesis of the cell wall peptidoglycan: transfers peptidoglycan precursor phospho-MurNAc-pentapeptide from UDP-MurNAc-pentapeptide onto the lipid carrier undecaprenyl phosphate, yielding undecaprenyl-pyrophosphoryl-MurNAc-pentapeptide, known as lipid I.</text>
</comment>
<comment type="catalytic activity">
    <reaction evidence="1">
        <text>UDP-N-acetyl-alpha-D-muramoyl-L-alanyl-gamma-D-glutamyl-meso-2,6-diaminopimeloyl-D-alanyl-D-alanine + di-trans,octa-cis-undecaprenyl phosphate = di-trans,octa-cis-undecaprenyl diphospho-N-acetyl-alpha-D-muramoyl-L-alanyl-D-glutamyl-meso-2,6-diaminopimeloyl-D-alanyl-D-alanine + UMP</text>
        <dbReference type="Rhea" id="RHEA:28386"/>
        <dbReference type="ChEBI" id="CHEBI:57865"/>
        <dbReference type="ChEBI" id="CHEBI:60392"/>
        <dbReference type="ChEBI" id="CHEBI:61386"/>
        <dbReference type="ChEBI" id="CHEBI:61387"/>
        <dbReference type="EC" id="2.7.8.13"/>
    </reaction>
</comment>
<comment type="cofactor">
    <cofactor evidence="1">
        <name>Mg(2+)</name>
        <dbReference type="ChEBI" id="CHEBI:18420"/>
    </cofactor>
</comment>
<comment type="pathway">
    <text evidence="1">Cell wall biogenesis; peptidoglycan biosynthesis.</text>
</comment>
<comment type="subcellular location">
    <subcellularLocation>
        <location evidence="1">Cell inner membrane</location>
        <topology evidence="1">Multi-pass membrane protein</topology>
    </subcellularLocation>
</comment>
<comment type="similarity">
    <text evidence="1">Belongs to the glycosyltransferase 4 family. MraY subfamily.</text>
</comment>
<sequence length="360" mass="40014">MLVWLAEHLVKYYSGFNVFSYLTFRAIVSLLTALFISLWMGPRMIARLQKLSFGQVVRNDGPESHFSKRGTPTMGGIMILTAIVISVLLWAYPSNPYVWCVLVVLIGYGIIGFVDDYHKVVRKDTKGLIARWKYFWMSVIALGVAFALYLVGKDTPATQLVVPFFKDVMPQLGLFYILLSYFVIVGTGNAVNLTDGLDGLAIMPTVFVAAGFALVAWATGNMNFANYLHIPYLRYAGELVIVCTAIVGAGLGFLWFNTYPAQVFMGDVGSLALGGALGIIAVLLRQEFLLVIMGGVFVVETLSVILQVGSFKLRGQRIFRMAPIHHHYELKGWPEPRVIVRFWIISLMLVLIGLATLKVR</sequence>
<feature type="chain" id="PRO_0000108883" description="Phospho-N-acetylmuramoyl-pentapeptide-transferase">
    <location>
        <begin position="1"/>
        <end position="360"/>
    </location>
</feature>
<feature type="topological domain" description="Periplasmic" evidence="1">
    <location>
        <begin position="1"/>
        <end position="25"/>
    </location>
</feature>
<feature type="transmembrane region" description="Helical" evidence="1">
    <location>
        <begin position="26"/>
        <end position="46"/>
    </location>
</feature>
<feature type="topological domain" description="Cytoplasmic" evidence="1">
    <location>
        <begin position="47"/>
        <end position="71"/>
    </location>
</feature>
<feature type="transmembrane region" description="Helical" evidence="1">
    <location>
        <begin position="72"/>
        <end position="92"/>
    </location>
</feature>
<feature type="topological domain" description="Periplasmic" evidence="1">
    <location>
        <position position="93"/>
    </location>
</feature>
<feature type="transmembrane region" description="Helical" evidence="1">
    <location>
        <begin position="94"/>
        <end position="114"/>
    </location>
</feature>
<feature type="topological domain" description="Cytoplasmic" evidence="1">
    <location>
        <begin position="115"/>
        <end position="131"/>
    </location>
</feature>
<feature type="transmembrane region" description="Helical" evidence="1">
    <location>
        <begin position="132"/>
        <end position="152"/>
    </location>
</feature>
<feature type="topological domain" description="Periplasmic" evidence="1">
    <location>
        <begin position="153"/>
        <end position="167"/>
    </location>
</feature>
<feature type="transmembrane region" description="Helical" evidence="1">
    <location>
        <begin position="168"/>
        <end position="188"/>
    </location>
</feature>
<feature type="topological domain" description="Cytoplasmic" evidence="1">
    <location>
        <begin position="189"/>
        <end position="198"/>
    </location>
</feature>
<feature type="transmembrane region" description="Helical" evidence="1">
    <location>
        <begin position="199"/>
        <end position="219"/>
    </location>
</feature>
<feature type="topological domain" description="Periplasmic" evidence="1">
    <location>
        <begin position="220"/>
        <end position="235"/>
    </location>
</feature>
<feature type="transmembrane region" description="Helical" evidence="1">
    <location>
        <begin position="236"/>
        <end position="256"/>
    </location>
</feature>
<feature type="topological domain" description="Cytoplasmic" evidence="1">
    <location>
        <begin position="257"/>
        <end position="262"/>
    </location>
</feature>
<feature type="transmembrane region" description="Helical" evidence="1">
    <location>
        <begin position="263"/>
        <end position="283"/>
    </location>
</feature>
<feature type="topological domain" description="Periplasmic" evidence="1">
    <location>
        <begin position="284"/>
        <end position="287"/>
    </location>
</feature>
<feature type="transmembrane region" description="Helical" evidence="1">
    <location>
        <begin position="288"/>
        <end position="308"/>
    </location>
</feature>
<feature type="topological domain" description="Cytoplasmic" evidence="1">
    <location>
        <begin position="309"/>
        <end position="337"/>
    </location>
</feature>
<feature type="transmembrane region" description="Helical" evidence="1">
    <location>
        <begin position="338"/>
        <end position="358"/>
    </location>
</feature>
<feature type="topological domain" description="Periplasmic" evidence="1">
    <location>
        <begin position="359"/>
        <end position="360"/>
    </location>
</feature>
<organism>
    <name type="scientific">Salmonella paratyphi A (strain ATCC 9150 / SARB42)</name>
    <dbReference type="NCBI Taxonomy" id="295319"/>
    <lineage>
        <taxon>Bacteria</taxon>
        <taxon>Pseudomonadati</taxon>
        <taxon>Pseudomonadota</taxon>
        <taxon>Gammaproteobacteria</taxon>
        <taxon>Enterobacterales</taxon>
        <taxon>Enterobacteriaceae</taxon>
        <taxon>Salmonella</taxon>
    </lineage>
</organism>